<protein>
    <recommendedName>
        <fullName evidence="1">4-hydroxy-3-methylbut-2-enyl diphosphate reductase</fullName>
        <shortName evidence="1">HMBPP reductase</shortName>
        <ecNumber evidence="1">1.17.7.4</ecNumber>
    </recommendedName>
</protein>
<organism>
    <name type="scientific">Wolbachia sp. subsp. Brugia malayi (strain TRS)</name>
    <dbReference type="NCBI Taxonomy" id="292805"/>
    <lineage>
        <taxon>Bacteria</taxon>
        <taxon>Pseudomonadati</taxon>
        <taxon>Pseudomonadota</taxon>
        <taxon>Alphaproteobacteria</taxon>
        <taxon>Rickettsiales</taxon>
        <taxon>Anaplasmataceae</taxon>
        <taxon>Wolbachieae</taxon>
        <taxon>Wolbachia</taxon>
    </lineage>
</organism>
<dbReference type="EC" id="1.17.7.4" evidence="1"/>
<dbReference type="EMBL" id="AE017321">
    <property type="protein sequence ID" value="AAW70638.1"/>
    <property type="molecule type" value="Genomic_DNA"/>
</dbReference>
<dbReference type="RefSeq" id="WP_011256248.1">
    <property type="nucleotide sequence ID" value="NC_006833.1"/>
</dbReference>
<dbReference type="SMR" id="Q5GTN6"/>
<dbReference type="STRING" id="292805.Wbm0046"/>
<dbReference type="KEGG" id="wbm:Wbm0046"/>
<dbReference type="eggNOG" id="COG0761">
    <property type="taxonomic scope" value="Bacteria"/>
</dbReference>
<dbReference type="HOGENOM" id="CLU_027486_1_0_5"/>
<dbReference type="UniPathway" id="UPA00056">
    <property type="reaction ID" value="UER00097"/>
</dbReference>
<dbReference type="UniPathway" id="UPA00059">
    <property type="reaction ID" value="UER00105"/>
</dbReference>
<dbReference type="Proteomes" id="UP000000534">
    <property type="component" value="Chromosome"/>
</dbReference>
<dbReference type="GO" id="GO:0051539">
    <property type="term" value="F:4 iron, 4 sulfur cluster binding"/>
    <property type="evidence" value="ECO:0007669"/>
    <property type="project" value="UniProtKB-UniRule"/>
</dbReference>
<dbReference type="GO" id="GO:0051745">
    <property type="term" value="F:4-hydroxy-3-methylbut-2-enyl diphosphate reductase activity"/>
    <property type="evidence" value="ECO:0007669"/>
    <property type="project" value="UniProtKB-UniRule"/>
</dbReference>
<dbReference type="GO" id="GO:0046872">
    <property type="term" value="F:metal ion binding"/>
    <property type="evidence" value="ECO:0007669"/>
    <property type="project" value="UniProtKB-KW"/>
</dbReference>
<dbReference type="GO" id="GO:0050992">
    <property type="term" value="P:dimethylallyl diphosphate biosynthetic process"/>
    <property type="evidence" value="ECO:0007669"/>
    <property type="project" value="UniProtKB-UniRule"/>
</dbReference>
<dbReference type="GO" id="GO:0019288">
    <property type="term" value="P:isopentenyl diphosphate biosynthetic process, methylerythritol 4-phosphate pathway"/>
    <property type="evidence" value="ECO:0007669"/>
    <property type="project" value="UniProtKB-UniRule"/>
</dbReference>
<dbReference type="GO" id="GO:0016114">
    <property type="term" value="P:terpenoid biosynthetic process"/>
    <property type="evidence" value="ECO:0007669"/>
    <property type="project" value="UniProtKB-UniRule"/>
</dbReference>
<dbReference type="CDD" id="cd13944">
    <property type="entry name" value="lytB_ispH"/>
    <property type="match status" value="1"/>
</dbReference>
<dbReference type="Gene3D" id="3.40.50.11270">
    <property type="match status" value="1"/>
</dbReference>
<dbReference type="Gene3D" id="3.40.1010.20">
    <property type="entry name" value="4-hydroxy-3-methylbut-2-enyl diphosphate reductase, catalytic domain"/>
    <property type="match status" value="2"/>
</dbReference>
<dbReference type="HAMAP" id="MF_00191">
    <property type="entry name" value="IspH"/>
    <property type="match status" value="1"/>
</dbReference>
<dbReference type="InterPro" id="IPR003451">
    <property type="entry name" value="LytB/IspH"/>
</dbReference>
<dbReference type="NCBIfam" id="TIGR00216">
    <property type="entry name" value="ispH_lytB"/>
    <property type="match status" value="1"/>
</dbReference>
<dbReference type="NCBIfam" id="NF002190">
    <property type="entry name" value="PRK01045.1-4"/>
    <property type="match status" value="1"/>
</dbReference>
<dbReference type="PANTHER" id="PTHR30426">
    <property type="entry name" value="4-HYDROXY-3-METHYLBUT-2-ENYL DIPHOSPHATE REDUCTASE"/>
    <property type="match status" value="1"/>
</dbReference>
<dbReference type="PANTHER" id="PTHR30426:SF0">
    <property type="entry name" value="4-HYDROXY-3-METHYLBUT-2-ENYL DIPHOSPHATE REDUCTASE"/>
    <property type="match status" value="1"/>
</dbReference>
<dbReference type="Pfam" id="PF02401">
    <property type="entry name" value="LYTB"/>
    <property type="match status" value="1"/>
</dbReference>
<proteinExistence type="inferred from homology"/>
<feature type="chain" id="PRO_0000128897" description="4-hydroxy-3-methylbut-2-enyl diphosphate reductase">
    <location>
        <begin position="1"/>
        <end position="309"/>
    </location>
</feature>
<feature type="active site" description="Proton donor" evidence="1">
    <location>
        <position position="129"/>
    </location>
</feature>
<feature type="binding site" evidence="1">
    <location>
        <position position="12"/>
    </location>
    <ligand>
        <name>[4Fe-4S] cluster</name>
        <dbReference type="ChEBI" id="CHEBI:49883"/>
    </ligand>
</feature>
<feature type="binding site" evidence="1">
    <location>
        <position position="43"/>
    </location>
    <ligand>
        <name>(2E)-4-hydroxy-3-methylbut-2-enyl diphosphate</name>
        <dbReference type="ChEBI" id="CHEBI:128753"/>
    </ligand>
</feature>
<feature type="binding site" evidence="1">
    <location>
        <position position="43"/>
    </location>
    <ligand>
        <name>dimethylallyl diphosphate</name>
        <dbReference type="ChEBI" id="CHEBI:57623"/>
    </ligand>
</feature>
<feature type="binding site" evidence="1">
    <location>
        <position position="43"/>
    </location>
    <ligand>
        <name>isopentenyl diphosphate</name>
        <dbReference type="ChEBI" id="CHEBI:128769"/>
    </ligand>
</feature>
<feature type="binding site" evidence="1">
    <location>
        <position position="77"/>
    </location>
    <ligand>
        <name>(2E)-4-hydroxy-3-methylbut-2-enyl diphosphate</name>
        <dbReference type="ChEBI" id="CHEBI:128753"/>
    </ligand>
</feature>
<feature type="binding site" evidence="1">
    <location>
        <position position="77"/>
    </location>
    <ligand>
        <name>dimethylallyl diphosphate</name>
        <dbReference type="ChEBI" id="CHEBI:57623"/>
    </ligand>
</feature>
<feature type="binding site" evidence="1">
    <location>
        <position position="77"/>
    </location>
    <ligand>
        <name>isopentenyl diphosphate</name>
        <dbReference type="ChEBI" id="CHEBI:128769"/>
    </ligand>
</feature>
<feature type="binding site" evidence="1">
    <location>
        <position position="99"/>
    </location>
    <ligand>
        <name>[4Fe-4S] cluster</name>
        <dbReference type="ChEBI" id="CHEBI:49883"/>
    </ligand>
</feature>
<feature type="binding site" evidence="1">
    <location>
        <position position="127"/>
    </location>
    <ligand>
        <name>(2E)-4-hydroxy-3-methylbut-2-enyl diphosphate</name>
        <dbReference type="ChEBI" id="CHEBI:128753"/>
    </ligand>
</feature>
<feature type="binding site" evidence="1">
    <location>
        <position position="127"/>
    </location>
    <ligand>
        <name>dimethylallyl diphosphate</name>
        <dbReference type="ChEBI" id="CHEBI:57623"/>
    </ligand>
</feature>
<feature type="binding site" evidence="1">
    <location>
        <position position="127"/>
    </location>
    <ligand>
        <name>isopentenyl diphosphate</name>
        <dbReference type="ChEBI" id="CHEBI:128769"/>
    </ligand>
</feature>
<feature type="binding site" evidence="1">
    <location>
        <position position="167"/>
    </location>
    <ligand>
        <name>(2E)-4-hydroxy-3-methylbut-2-enyl diphosphate</name>
        <dbReference type="ChEBI" id="CHEBI:128753"/>
    </ligand>
</feature>
<feature type="binding site" evidence="1">
    <location>
        <position position="197"/>
    </location>
    <ligand>
        <name>[4Fe-4S] cluster</name>
        <dbReference type="ChEBI" id="CHEBI:49883"/>
    </ligand>
</feature>
<feature type="binding site" evidence="1">
    <location>
        <position position="225"/>
    </location>
    <ligand>
        <name>(2E)-4-hydroxy-3-methylbut-2-enyl diphosphate</name>
        <dbReference type="ChEBI" id="CHEBI:128753"/>
    </ligand>
</feature>
<feature type="binding site" evidence="1">
    <location>
        <position position="225"/>
    </location>
    <ligand>
        <name>dimethylallyl diphosphate</name>
        <dbReference type="ChEBI" id="CHEBI:57623"/>
    </ligand>
</feature>
<feature type="binding site" evidence="1">
    <location>
        <position position="225"/>
    </location>
    <ligand>
        <name>isopentenyl diphosphate</name>
        <dbReference type="ChEBI" id="CHEBI:128769"/>
    </ligand>
</feature>
<feature type="binding site" evidence="1">
    <location>
        <position position="226"/>
    </location>
    <ligand>
        <name>(2E)-4-hydroxy-3-methylbut-2-enyl diphosphate</name>
        <dbReference type="ChEBI" id="CHEBI:128753"/>
    </ligand>
</feature>
<feature type="binding site" evidence="1">
    <location>
        <position position="226"/>
    </location>
    <ligand>
        <name>dimethylallyl diphosphate</name>
        <dbReference type="ChEBI" id="CHEBI:57623"/>
    </ligand>
</feature>
<feature type="binding site" evidence="1">
    <location>
        <position position="226"/>
    </location>
    <ligand>
        <name>isopentenyl diphosphate</name>
        <dbReference type="ChEBI" id="CHEBI:128769"/>
    </ligand>
</feature>
<feature type="binding site" evidence="1">
    <location>
        <position position="227"/>
    </location>
    <ligand>
        <name>(2E)-4-hydroxy-3-methylbut-2-enyl diphosphate</name>
        <dbReference type="ChEBI" id="CHEBI:128753"/>
    </ligand>
</feature>
<feature type="binding site" evidence="1">
    <location>
        <position position="227"/>
    </location>
    <ligand>
        <name>dimethylallyl diphosphate</name>
        <dbReference type="ChEBI" id="CHEBI:57623"/>
    </ligand>
</feature>
<feature type="binding site" evidence="1">
    <location>
        <position position="227"/>
    </location>
    <ligand>
        <name>isopentenyl diphosphate</name>
        <dbReference type="ChEBI" id="CHEBI:128769"/>
    </ligand>
</feature>
<feature type="binding site" evidence="1">
    <location>
        <position position="269"/>
    </location>
    <ligand>
        <name>(2E)-4-hydroxy-3-methylbut-2-enyl diphosphate</name>
        <dbReference type="ChEBI" id="CHEBI:128753"/>
    </ligand>
</feature>
<feature type="binding site" evidence="1">
    <location>
        <position position="269"/>
    </location>
    <ligand>
        <name>dimethylallyl diphosphate</name>
        <dbReference type="ChEBI" id="CHEBI:57623"/>
    </ligand>
</feature>
<feature type="binding site" evidence="1">
    <location>
        <position position="269"/>
    </location>
    <ligand>
        <name>isopentenyl diphosphate</name>
        <dbReference type="ChEBI" id="CHEBI:128769"/>
    </ligand>
</feature>
<accession>Q5GTN6</accession>
<gene>
    <name evidence="1" type="primary">ispH</name>
    <name type="ordered locus">Wbm0046</name>
</gene>
<keyword id="KW-0004">4Fe-4S</keyword>
<keyword id="KW-0408">Iron</keyword>
<keyword id="KW-0411">Iron-sulfur</keyword>
<keyword id="KW-0414">Isoprene biosynthesis</keyword>
<keyword id="KW-0479">Metal-binding</keyword>
<keyword id="KW-0560">Oxidoreductase</keyword>
<keyword id="KW-1185">Reference proteome</keyword>
<reference key="1">
    <citation type="journal article" date="2005" name="PLoS Biol.">
        <title>The Wolbachia genome of Brugia malayi: endosymbiont evolution within a human pathogenic nematode.</title>
        <authorList>
            <person name="Foster J."/>
            <person name="Ganatra M."/>
            <person name="Kamal I."/>
            <person name="Ware J."/>
            <person name="Makarova K."/>
            <person name="Ivanova N."/>
            <person name="Bhattacharyya A."/>
            <person name="Kapatral V."/>
            <person name="Kumar S."/>
            <person name="Posfai J."/>
            <person name="Vincze T."/>
            <person name="Ingram J."/>
            <person name="Moran L."/>
            <person name="Lapidus A."/>
            <person name="Omelchenko M."/>
            <person name="Kyrpides N."/>
            <person name="Ghedin E."/>
            <person name="Wang S."/>
            <person name="Goltsman E."/>
            <person name="Joukov V."/>
            <person name="Ostrovskaya O."/>
            <person name="Tsukerman K."/>
            <person name="Mazur M."/>
            <person name="Comb D."/>
            <person name="Koonin E."/>
            <person name="Slatko B."/>
        </authorList>
    </citation>
    <scope>NUCLEOTIDE SEQUENCE [LARGE SCALE GENOMIC DNA]</scope>
    <source>
        <strain>TRS</strain>
    </source>
</reference>
<comment type="function">
    <text evidence="1">Catalyzes the conversion of 1-hydroxy-2-methyl-2-(E)-butenyl 4-diphosphate (HMBPP) into a mixture of isopentenyl diphosphate (IPP) and dimethylallyl diphosphate (DMAPP). Acts in the terminal step of the DOXP/MEP pathway for isoprenoid precursor biosynthesis.</text>
</comment>
<comment type="catalytic activity">
    <reaction evidence="1">
        <text>isopentenyl diphosphate + 2 oxidized [2Fe-2S]-[ferredoxin] + H2O = (2E)-4-hydroxy-3-methylbut-2-enyl diphosphate + 2 reduced [2Fe-2S]-[ferredoxin] + 2 H(+)</text>
        <dbReference type="Rhea" id="RHEA:24488"/>
        <dbReference type="Rhea" id="RHEA-COMP:10000"/>
        <dbReference type="Rhea" id="RHEA-COMP:10001"/>
        <dbReference type="ChEBI" id="CHEBI:15377"/>
        <dbReference type="ChEBI" id="CHEBI:15378"/>
        <dbReference type="ChEBI" id="CHEBI:33737"/>
        <dbReference type="ChEBI" id="CHEBI:33738"/>
        <dbReference type="ChEBI" id="CHEBI:128753"/>
        <dbReference type="ChEBI" id="CHEBI:128769"/>
        <dbReference type="EC" id="1.17.7.4"/>
    </reaction>
</comment>
<comment type="catalytic activity">
    <reaction evidence="1">
        <text>dimethylallyl diphosphate + 2 oxidized [2Fe-2S]-[ferredoxin] + H2O = (2E)-4-hydroxy-3-methylbut-2-enyl diphosphate + 2 reduced [2Fe-2S]-[ferredoxin] + 2 H(+)</text>
        <dbReference type="Rhea" id="RHEA:24825"/>
        <dbReference type="Rhea" id="RHEA-COMP:10000"/>
        <dbReference type="Rhea" id="RHEA-COMP:10001"/>
        <dbReference type="ChEBI" id="CHEBI:15377"/>
        <dbReference type="ChEBI" id="CHEBI:15378"/>
        <dbReference type="ChEBI" id="CHEBI:33737"/>
        <dbReference type="ChEBI" id="CHEBI:33738"/>
        <dbReference type="ChEBI" id="CHEBI:57623"/>
        <dbReference type="ChEBI" id="CHEBI:128753"/>
        <dbReference type="EC" id="1.17.7.4"/>
    </reaction>
</comment>
<comment type="cofactor">
    <cofactor evidence="1">
        <name>[4Fe-4S] cluster</name>
        <dbReference type="ChEBI" id="CHEBI:49883"/>
    </cofactor>
    <text evidence="1">Binds 1 [4Fe-4S] cluster per subunit.</text>
</comment>
<comment type="pathway">
    <text evidence="1">Isoprenoid biosynthesis; dimethylallyl diphosphate biosynthesis; dimethylallyl diphosphate from (2E)-4-hydroxy-3-methylbutenyl diphosphate: step 1/1.</text>
</comment>
<comment type="pathway">
    <text evidence="1">Isoprenoid biosynthesis; isopentenyl diphosphate biosynthesis via DXP pathway; isopentenyl diphosphate from 1-deoxy-D-xylulose 5-phosphate: step 6/6.</text>
</comment>
<comment type="similarity">
    <text evidence="1">Belongs to the IspH family.</text>
</comment>
<name>ISPH_WOLTR</name>
<evidence type="ECO:0000255" key="1">
    <source>
        <dbReference type="HAMAP-Rule" id="MF_00191"/>
    </source>
</evidence>
<sequence>MEIILAEPRGFCAGVKRAVDILAITLKKYRNKRKVYVLHEIVHNKYIVEDFKRQGVIFVNSIRDIKDNRGILIFSAHGVSKNIEDKAKRKGIQVIDATCPLVSKVHKEAKRYEDSGKELILIGHKNHPEVKGIRGRVNNPIVLVQTLQNVRDLKVKNPDNLSYVTQTTLSTDDTREIITALKLRFPNITGPNLKDICYATQNRQNAVKKLTEIVDIVLIIGSKNSSNSNRLLDLCTARGKRAYLIDNYSYMDKSWLQGIEKIGITAGASAPDILVDELINHLKINVNTKVSVMSDGVTENVQFKIPHLV</sequence>